<organism>
    <name type="scientific">Hordeum vulgare</name>
    <name type="common">Barley</name>
    <dbReference type="NCBI Taxonomy" id="4513"/>
    <lineage>
        <taxon>Eukaryota</taxon>
        <taxon>Viridiplantae</taxon>
        <taxon>Streptophyta</taxon>
        <taxon>Embryophyta</taxon>
        <taxon>Tracheophyta</taxon>
        <taxon>Spermatophyta</taxon>
        <taxon>Magnoliopsida</taxon>
        <taxon>Liliopsida</taxon>
        <taxon>Poales</taxon>
        <taxon>Poaceae</taxon>
        <taxon>BOP clade</taxon>
        <taxon>Pooideae</taxon>
        <taxon>Triticodae</taxon>
        <taxon>Triticeae</taxon>
        <taxon>Hordeinae</taxon>
        <taxon>Hordeum</taxon>
    </lineage>
</organism>
<dbReference type="EMBL" id="AJ315794">
    <property type="protein sequence ID" value="CAC44242.1"/>
    <property type="molecule type" value="mRNA"/>
</dbReference>
<dbReference type="SMR" id="Q949H0"/>
<dbReference type="ExpressionAtlas" id="Q949H0">
    <property type="expression patterns" value="baseline and differential"/>
</dbReference>
<dbReference type="GO" id="GO:0030686">
    <property type="term" value="C:90S preribosome"/>
    <property type="evidence" value="ECO:0007669"/>
    <property type="project" value="TreeGrafter"/>
</dbReference>
<dbReference type="GO" id="GO:0022627">
    <property type="term" value="C:cytosolic small ribosomal subunit"/>
    <property type="evidence" value="ECO:0007669"/>
    <property type="project" value="TreeGrafter"/>
</dbReference>
<dbReference type="GO" id="GO:0032040">
    <property type="term" value="C:small-subunit processome"/>
    <property type="evidence" value="ECO:0007669"/>
    <property type="project" value="TreeGrafter"/>
</dbReference>
<dbReference type="GO" id="GO:0003735">
    <property type="term" value="F:structural constituent of ribosome"/>
    <property type="evidence" value="ECO:0007669"/>
    <property type="project" value="InterPro"/>
</dbReference>
<dbReference type="GO" id="GO:0042274">
    <property type="term" value="P:ribosomal small subunit biogenesis"/>
    <property type="evidence" value="ECO:0007669"/>
    <property type="project" value="TreeGrafter"/>
</dbReference>
<dbReference type="GO" id="GO:0006364">
    <property type="term" value="P:rRNA processing"/>
    <property type="evidence" value="ECO:0007669"/>
    <property type="project" value="TreeGrafter"/>
</dbReference>
<dbReference type="GO" id="GO:0006412">
    <property type="term" value="P:translation"/>
    <property type="evidence" value="ECO:0007669"/>
    <property type="project" value="InterPro"/>
</dbReference>
<dbReference type="InterPro" id="IPR000554">
    <property type="entry name" value="Ribosomal_eS7"/>
</dbReference>
<dbReference type="PANTHER" id="PTHR11278">
    <property type="entry name" value="40S RIBOSOMAL PROTEIN S7"/>
    <property type="match status" value="1"/>
</dbReference>
<dbReference type="PANTHER" id="PTHR11278:SF28">
    <property type="entry name" value="40S RIBOSOMAL PROTEIN S7"/>
    <property type="match status" value="1"/>
</dbReference>
<dbReference type="Pfam" id="PF01251">
    <property type="entry name" value="Ribosomal_S7e"/>
    <property type="match status" value="1"/>
</dbReference>
<gene>
    <name type="primary">RPS7</name>
</gene>
<feature type="chain" id="PRO_0000174207" description="Small ribosomal subunit protein eS7">
    <location>
        <begin position="1"/>
        <end position="191"/>
    </location>
</feature>
<keyword id="KW-0687">Ribonucleoprotein</keyword>
<keyword id="KW-0689">Ribosomal protein</keyword>
<accession>Q949H0</accession>
<evidence type="ECO:0000305" key="1"/>
<name>RS7_HORVU</name>
<comment type="similarity">
    <text evidence="1">Belongs to the eukaryotic ribosomal protein eS7 family.</text>
</comment>
<reference key="1">
    <citation type="submission" date="2001-07" db="EMBL/GenBank/DDBJ databases">
        <title>Several components of the protein synthesis machinary are cold regulated in a chloroplast dependent manner in barley and wheat.</title>
        <authorList>
            <person name="Baldi P."/>
        </authorList>
    </citation>
    <scope>NUCLEOTIDE SEQUENCE [MRNA]</scope>
    <source>
        <strain>cv. Nure</strain>
    </source>
</reference>
<proteinExistence type="evidence at transcript level"/>
<protein>
    <recommendedName>
        <fullName evidence="1">Small ribosomal subunit protein eS7</fullName>
    </recommendedName>
    <alternativeName>
        <fullName>40S ribosomal protein S7</fullName>
    </alternativeName>
</protein>
<sequence>MYTARKKIQKDKGVEPSEFEDTVAQAFFDLENGNQELKSDLKDLYINTAIQMDVVGNRKAVVIHVPYRLRKPFRKIHVRLVRELERVSGKDVVFVATRRIVRPPKKGSAVQRPRTRTLTAVHDGILEDVVYPAEIVGKRVRYRLDGAKVIKIYLDPKERNNTEYKLETFSAVYRRLCGKDVVFEYPVAETA</sequence>